<sequence length="532" mass="56994">MSVALASEYQLVQNAQLPQRWSQSARKSLAILEATARKEATAQMEAAGGSFCGQFPVDPAFKVLSLEYSAPNPDIARAIRRVDSVPNPPLPSHVVAIQSTAVDADLSLAMGVSLTPGRHTSYLVDARALQQSNSAAVAARKADGDKWGPACDEMFRGCRCVTGQEVVFYTAVKEPAGEVEGGEGSLFKPSFDGPAFRPSWGELSGKATGVVACVLQVPIGKETDIICAEYDNLVSKGQFATVDRFGGDHTVNMTGNALIQNDGKAISKGYAVAHRARVTSNVYGKANDVSLQRLAETVWSVVEKRLSFMPAYRDLVITEQGKPFMLGATATNIISLTENQGVMLHLDTDDGVWTIILWFHRHSGIIAGGEFVLPSLGISFQPLDFTIVVFAANTIVHGTRPLQTTGKIIRWGSSHFLRFKDVNALAQLGAAYGVDELDAKQRDQLEEVDAANSKDGVGAARRVASCMAAERKAAIEAQKAACVRGVVMNPCTGRMPSLLFWQVWRKPPALAVRANAVAGKKRAAADVDFCGA</sequence>
<protein>
    <recommendedName>
        <fullName evidence="4">5-methylcytosine-modifying enzyme 1</fullName>
        <shortName evidence="3">5mC-modifying enzyme 1</shortName>
        <ecNumber evidence="1 2">1.14.99.-</ecNumber>
    </recommendedName>
    <alternativeName>
        <fullName evidence="4">Ten-eleven translocation 1 gene protein homolog</fullName>
        <shortName evidence="3">CrTET1</shortName>
    </alternativeName>
</protein>
<keyword id="KW-0002">3D-structure</keyword>
<keyword id="KW-0223">Dioxygenase</keyword>
<keyword id="KW-0408">Iron</keyword>
<keyword id="KW-0479">Metal-binding</keyword>
<keyword id="KW-0539">Nucleus</keyword>
<keyword id="KW-0560">Oxidoreductase</keyword>
<keyword id="KW-1185">Reference proteome</keyword>
<comment type="function">
    <text evidence="1 2">Dioxygenase that catalyzes DNA modification by mediating the conversion of the modified genomic base 5-methylcytosine (5mC) into 5-glyceryl-methylcytosine (5gmC) (PubMed:31043749, PubMed:33531488). Catalyzes the conjugation of a glyceryl moiety from L-ascorbate (vitamin C) to the methyl group of 5mC through a carbon-carbon bond (PubMed:31043749, PubMed:33531488). 5gmC DNA modification may be required during photosynthesis as an epigenetic mark that couteracts DNA methylation (PubMed:31043749).</text>
</comment>
<comment type="catalytic activity">
    <reaction evidence="1 2">
        <text>a 5-methyl-2'-deoxycytidine in DNA + L-ascorbate + O2 = a (8S,9S)-5-glyceryl-2'-deoxycytidine in DNA + glyoxylate + CO2</text>
        <dbReference type="Rhea" id="RHEA:60132"/>
        <dbReference type="Rhea" id="RHEA-COMP:11370"/>
        <dbReference type="Rhea" id="RHEA-COMP:15515"/>
        <dbReference type="ChEBI" id="CHEBI:15379"/>
        <dbReference type="ChEBI" id="CHEBI:16526"/>
        <dbReference type="ChEBI" id="CHEBI:36655"/>
        <dbReference type="ChEBI" id="CHEBI:38290"/>
        <dbReference type="ChEBI" id="CHEBI:85454"/>
        <dbReference type="ChEBI" id="CHEBI:143613"/>
    </reaction>
    <physiologicalReaction direction="left-to-right" evidence="1 2">
        <dbReference type="Rhea" id="RHEA:60133"/>
    </physiologicalReaction>
</comment>
<comment type="catalytic activity">
    <reaction evidence="1 2">
        <text>a 5-methyl-2'-deoxycytidine in DNA + L-ascorbate + O2 = a (8S,9R)-5-glyceryl-2'-deoxycytidine in DNA + glyoxylate + CO2</text>
        <dbReference type="Rhea" id="RHEA:60136"/>
        <dbReference type="Rhea" id="RHEA-COMP:11370"/>
        <dbReference type="Rhea" id="RHEA-COMP:15516"/>
        <dbReference type="ChEBI" id="CHEBI:15379"/>
        <dbReference type="ChEBI" id="CHEBI:16526"/>
        <dbReference type="ChEBI" id="CHEBI:36655"/>
        <dbReference type="ChEBI" id="CHEBI:38290"/>
        <dbReference type="ChEBI" id="CHEBI:85454"/>
        <dbReference type="ChEBI" id="CHEBI:143614"/>
    </reaction>
    <physiologicalReaction direction="left-to-right" evidence="1 2">
        <dbReference type="Rhea" id="RHEA:60137"/>
    </physiologicalReaction>
</comment>
<comment type="cofactor">
    <cofactor evidence="1 2">
        <name>Fe(2+)</name>
        <dbReference type="ChEBI" id="CHEBI:29033"/>
    </cofactor>
    <text evidence="2">Binds 1 Fe(2+) ion per subunit.</text>
</comment>
<comment type="subcellular location">
    <subcellularLocation>
        <location evidence="4">Nucleus</location>
    </subcellularLocation>
</comment>
<comment type="disruption phenotype">
    <text evidence="1">Decreased 5-glyceryl-methylcytosines (5gmC) DNA modification in the genome (PubMed:31043749). Reduced fitness of cells during exposure to high light levels (PubMed:31043749). Defects may be caused by hypermethylation and down-regulation of LHCSR3, a protein-coding gene required for the protection of C.reinhardtii cells from photo-oxidative damage under high light conditions, causing a reduced capacity for photoprotective non-photochemical quenching (PubMed:31043749).</text>
</comment>
<comment type="similarity">
    <text evidence="4">Belongs to the TET family.</text>
</comment>
<evidence type="ECO:0000269" key="1">
    <source>
    </source>
</evidence>
<evidence type="ECO:0000269" key="2">
    <source>
    </source>
</evidence>
<evidence type="ECO:0000303" key="3">
    <source>
    </source>
</evidence>
<evidence type="ECO:0000305" key="4"/>
<evidence type="ECO:0000305" key="5">
    <source>
    </source>
</evidence>
<evidence type="ECO:0000312" key="6">
    <source>
        <dbReference type="EMBL" id="PNW75956.1"/>
    </source>
</evidence>
<evidence type="ECO:0007744" key="7">
    <source>
        <dbReference type="PDB" id="7CY5"/>
    </source>
</evidence>
<evidence type="ECO:0007744" key="8">
    <source>
        <dbReference type="PDB" id="7CY8"/>
    </source>
</evidence>
<evidence type="ECO:0007829" key="9">
    <source>
        <dbReference type="PDB" id="7CY4"/>
    </source>
</evidence>
<evidence type="ECO:0007829" key="10">
    <source>
        <dbReference type="PDB" id="7CY5"/>
    </source>
</evidence>
<evidence type="ECO:0007829" key="11">
    <source>
        <dbReference type="PDB" id="7CY6"/>
    </source>
</evidence>
<feature type="chain" id="PRO_0000447622" description="5-methylcytosine-modifying enzyme 1">
    <location>
        <begin position="1"/>
        <end position="532"/>
    </location>
</feature>
<feature type="binding site" evidence="2 7 8">
    <location>
        <begin position="335"/>
        <end position="337"/>
    </location>
    <ligand>
        <name>L-ascorbate</name>
        <dbReference type="ChEBI" id="CHEBI:38290"/>
    </ligand>
</feature>
<feature type="binding site" evidence="2 5">
    <location>
        <position position="345"/>
    </location>
    <ligand>
        <name>Fe cation</name>
        <dbReference type="ChEBI" id="CHEBI:24875"/>
        <note>catalytic</note>
    </ligand>
</feature>
<feature type="binding site" evidence="2 5">
    <location>
        <position position="347"/>
    </location>
    <ligand>
        <name>Fe cation</name>
        <dbReference type="ChEBI" id="CHEBI:24875"/>
        <note>catalytic</note>
    </ligand>
</feature>
<feature type="binding site" evidence="2 7 8">
    <location>
        <begin position="397"/>
        <end position="399"/>
    </location>
    <ligand>
        <name>L-ascorbate</name>
        <dbReference type="ChEBI" id="CHEBI:38290"/>
    </ligand>
</feature>
<feature type="binding site" evidence="2">
    <location>
        <position position="397"/>
    </location>
    <ligand>
        <name>Fe cation</name>
        <dbReference type="ChEBI" id="CHEBI:24875"/>
        <note>catalytic</note>
    </ligand>
</feature>
<feature type="mutagenesis site" description="Abolished dioxygenase activity." evidence="1">
    <original>A</original>
    <variation>V</variation>
    <location>
        <position position="330"/>
    </location>
</feature>
<feature type="mutagenesis site" description="Abolished dioxygenase activity." evidence="1">
    <original>H</original>
    <variation>A</variation>
    <location>
        <position position="345"/>
    </location>
</feature>
<feature type="mutagenesis site" description="Abolished dioxygenase activity." evidence="1">
    <original>D</original>
    <variation>A</variation>
    <location>
        <position position="347"/>
    </location>
</feature>
<feature type="mutagenesis site" description="Abolished dioxygenase activity." evidence="1">
    <original>D</original>
    <variation>A</variation>
    <location>
        <position position="350"/>
    </location>
</feature>
<feature type="helix" evidence="11">
    <location>
        <begin position="1"/>
        <end position="13"/>
    </location>
</feature>
<feature type="helix" evidence="11">
    <location>
        <begin position="23"/>
        <end position="47"/>
    </location>
</feature>
<feature type="strand" evidence="11">
    <location>
        <begin position="49"/>
        <end position="52"/>
    </location>
</feature>
<feature type="strand" evidence="11">
    <location>
        <begin position="55"/>
        <end position="57"/>
    </location>
</feature>
<feature type="strand" evidence="11">
    <location>
        <begin position="61"/>
        <end position="69"/>
    </location>
</feature>
<feature type="strand" evidence="11">
    <location>
        <begin position="72"/>
        <end position="74"/>
    </location>
</feature>
<feature type="strand" evidence="11">
    <location>
        <begin position="77"/>
        <end position="81"/>
    </location>
</feature>
<feature type="strand" evidence="11">
    <location>
        <begin position="83"/>
        <end position="86"/>
    </location>
</feature>
<feature type="strand" evidence="11">
    <location>
        <begin position="94"/>
        <end position="96"/>
    </location>
</feature>
<feature type="helix" evidence="11">
    <location>
        <begin position="100"/>
        <end position="110"/>
    </location>
</feature>
<feature type="strand" evidence="11">
    <location>
        <begin position="120"/>
        <end position="125"/>
    </location>
</feature>
<feature type="helix" evidence="11">
    <location>
        <begin position="126"/>
        <end position="142"/>
    </location>
</feature>
<feature type="strand" evidence="11">
    <location>
        <begin position="145"/>
        <end position="147"/>
    </location>
</feature>
<feature type="helix" evidence="11">
    <location>
        <begin position="149"/>
        <end position="156"/>
    </location>
</feature>
<feature type="strand" evidence="11">
    <location>
        <begin position="166"/>
        <end position="173"/>
    </location>
</feature>
<feature type="helix" evidence="11">
    <location>
        <begin position="201"/>
        <end position="203"/>
    </location>
</feature>
<feature type="strand" evidence="11">
    <location>
        <begin position="206"/>
        <end position="216"/>
    </location>
</feature>
<feature type="helix" evidence="11">
    <location>
        <begin position="221"/>
        <end position="235"/>
    </location>
</feature>
<feature type="strand" evidence="11">
    <location>
        <begin position="240"/>
        <end position="244"/>
    </location>
</feature>
<feature type="turn" evidence="11">
    <location>
        <begin position="245"/>
        <end position="248"/>
    </location>
</feature>
<feature type="strand" evidence="11">
    <location>
        <begin position="249"/>
        <end position="256"/>
    </location>
</feature>
<feature type="strand" evidence="11">
    <location>
        <begin position="267"/>
        <end position="269"/>
    </location>
</feature>
<feature type="helix" evidence="11">
    <location>
        <begin position="271"/>
        <end position="279"/>
    </location>
</feature>
<feature type="helix" evidence="11">
    <location>
        <begin position="286"/>
        <end position="305"/>
    </location>
</feature>
<feature type="helix" evidence="11">
    <location>
        <begin position="308"/>
        <end position="316"/>
    </location>
</feature>
<feature type="turn" evidence="11">
    <location>
        <begin position="319"/>
        <end position="321"/>
    </location>
</feature>
<feature type="helix" evidence="11">
    <location>
        <begin position="322"/>
        <end position="324"/>
    </location>
</feature>
<feature type="strand" evidence="11">
    <location>
        <begin position="325"/>
        <end position="330"/>
    </location>
</feature>
<feature type="strand" evidence="11">
    <location>
        <begin position="333"/>
        <end position="339"/>
    </location>
</feature>
<feature type="strand" evidence="11">
    <location>
        <begin position="342"/>
        <end position="345"/>
    </location>
</feature>
<feature type="strand" evidence="9">
    <location>
        <begin position="348"/>
        <end position="350"/>
    </location>
</feature>
<feature type="strand" evidence="11">
    <location>
        <begin position="352"/>
        <end position="362"/>
    </location>
</feature>
<feature type="strand" evidence="11">
    <location>
        <begin position="364"/>
        <end position="368"/>
    </location>
</feature>
<feature type="strand" evidence="11">
    <location>
        <begin position="371"/>
        <end position="373"/>
    </location>
</feature>
<feature type="turn" evidence="11">
    <location>
        <begin position="374"/>
        <end position="377"/>
    </location>
</feature>
<feature type="strand" evidence="11">
    <location>
        <begin position="378"/>
        <end position="380"/>
    </location>
</feature>
<feature type="strand" evidence="11">
    <location>
        <begin position="384"/>
        <end position="390"/>
    </location>
</feature>
<feature type="turn" evidence="11">
    <location>
        <begin position="392"/>
        <end position="394"/>
    </location>
</feature>
<feature type="strand" evidence="11">
    <location>
        <begin position="397"/>
        <end position="399"/>
    </location>
</feature>
<feature type="strand" evidence="11">
    <location>
        <begin position="402"/>
        <end position="407"/>
    </location>
</feature>
<feature type="strand" evidence="11">
    <location>
        <begin position="409"/>
        <end position="416"/>
    </location>
</feature>
<feature type="helix" evidence="11">
    <location>
        <begin position="419"/>
        <end position="432"/>
    </location>
</feature>
<feature type="helix" evidence="10">
    <location>
        <begin position="434"/>
        <end position="436"/>
    </location>
</feature>
<feature type="helix" evidence="11">
    <location>
        <begin position="437"/>
        <end position="454"/>
    </location>
</feature>
<feature type="helix" evidence="11">
    <location>
        <begin position="457"/>
        <end position="480"/>
    </location>
</feature>
<feature type="turn" evidence="11">
    <location>
        <begin position="490"/>
        <end position="492"/>
    </location>
</feature>
<feature type="strand" evidence="11">
    <location>
        <begin position="502"/>
        <end position="504"/>
    </location>
</feature>
<reference key="1">
    <citation type="journal article" date="2007" name="Science">
        <title>The Chlamydomonas genome reveals the evolution of key animal and plant functions.</title>
        <authorList>
            <person name="Merchant S.S."/>
            <person name="Prochnik S.E."/>
            <person name="Vallon O."/>
            <person name="Harris E.H."/>
            <person name="Karpowicz S.J."/>
            <person name="Witman G.B."/>
            <person name="Terry A."/>
            <person name="Salamov A."/>
            <person name="Fritz-Laylin L.K."/>
            <person name="Marechal-Drouard L."/>
            <person name="Marshall W.F."/>
            <person name="Qu L.H."/>
            <person name="Nelson D.R."/>
            <person name="Sanderfoot A.A."/>
            <person name="Spalding M.H."/>
            <person name="Kapitonov V.V."/>
            <person name="Ren Q."/>
            <person name="Ferris P."/>
            <person name="Lindquist E."/>
            <person name="Shapiro H."/>
            <person name="Lucas S.M."/>
            <person name="Grimwood J."/>
            <person name="Schmutz J."/>
            <person name="Cardol P."/>
            <person name="Cerutti H."/>
            <person name="Chanfreau G."/>
            <person name="Chen C.L."/>
            <person name="Cognat V."/>
            <person name="Croft M.T."/>
            <person name="Dent R."/>
            <person name="Dutcher S."/>
            <person name="Fernandez E."/>
            <person name="Fukuzawa H."/>
            <person name="Gonzalez-Ballester D."/>
            <person name="Gonzalez-Halphen D."/>
            <person name="Hallmann A."/>
            <person name="Hanikenne M."/>
            <person name="Hippler M."/>
            <person name="Inwood W."/>
            <person name="Jabbari K."/>
            <person name="Kalanon M."/>
            <person name="Kuras R."/>
            <person name="Lefebvre P.A."/>
            <person name="Lemaire S.D."/>
            <person name="Lobanov A.V."/>
            <person name="Lohr M."/>
            <person name="Manuell A."/>
            <person name="Meier I."/>
            <person name="Mets L."/>
            <person name="Mittag M."/>
            <person name="Mittelmeier T."/>
            <person name="Moroney J.V."/>
            <person name="Moseley J."/>
            <person name="Napoli C."/>
            <person name="Nedelcu A.M."/>
            <person name="Niyogi K."/>
            <person name="Novoselov S.V."/>
            <person name="Paulsen I.T."/>
            <person name="Pazour G.J."/>
            <person name="Purton S."/>
            <person name="Ral J.P."/>
            <person name="Riano-Pachon D.M."/>
            <person name="Riekhof W."/>
            <person name="Rymarquis L."/>
            <person name="Schroda M."/>
            <person name="Stern D."/>
            <person name="Umen J."/>
            <person name="Willows R."/>
            <person name="Wilson N."/>
            <person name="Zimmer S.L."/>
            <person name="Allmer J."/>
            <person name="Balk J."/>
            <person name="Bisova K."/>
            <person name="Chen C.J."/>
            <person name="Elias M."/>
            <person name="Gendler K."/>
            <person name="Hauser C."/>
            <person name="Lamb M.R."/>
            <person name="Ledford H."/>
            <person name="Long J.C."/>
            <person name="Minagawa J."/>
            <person name="Page M.D."/>
            <person name="Pan J."/>
            <person name="Pootakham W."/>
            <person name="Roje S."/>
            <person name="Rose A."/>
            <person name="Stahlberg E."/>
            <person name="Terauchi A.M."/>
            <person name="Yang P."/>
            <person name="Ball S."/>
            <person name="Bowler C."/>
            <person name="Dieckmann C.L."/>
            <person name="Gladyshev V.N."/>
            <person name="Green P."/>
            <person name="Jorgensen R."/>
            <person name="Mayfield S."/>
            <person name="Mueller-Roeber B."/>
            <person name="Rajamani S."/>
            <person name="Sayre R.T."/>
            <person name="Brokstein P."/>
            <person name="Dubchak I."/>
            <person name="Goodstein D."/>
            <person name="Hornick L."/>
            <person name="Huang Y.W."/>
            <person name="Jhaveri J."/>
            <person name="Luo Y."/>
            <person name="Martinez D."/>
            <person name="Ngau W.C."/>
            <person name="Otillar B."/>
            <person name="Poliakov A."/>
            <person name="Porter A."/>
            <person name="Szajkowski L."/>
            <person name="Werner G."/>
            <person name="Zhou K."/>
            <person name="Grigoriev I.V."/>
            <person name="Rokhsar D.S."/>
            <person name="Grossman A.R."/>
        </authorList>
    </citation>
    <scope>NUCLEOTIDE SEQUENCE [LARGE SCALE GENOMIC DNA]</scope>
    <source>
        <strain>CC-503</strain>
    </source>
</reference>
<reference key="2">
    <citation type="journal article" date="2019" name="Nature">
        <title>A vitamin-C-derived DNA modification catalysed by an algal TET homologue.</title>
        <authorList>
            <person name="Xue J.H."/>
            <person name="Chen G.D."/>
            <person name="Hao F."/>
            <person name="Chen H."/>
            <person name="Fang Z."/>
            <person name="Chen F.F."/>
            <person name="Pang B."/>
            <person name="Yang Q.L."/>
            <person name="Wei X."/>
            <person name="Fan Q.Q."/>
            <person name="Xin C."/>
            <person name="Zhao J."/>
            <person name="Deng X."/>
            <person name="Wang B.A."/>
            <person name="Zhang X.J."/>
            <person name="Chu Y."/>
            <person name="Tang H."/>
            <person name="Yin H."/>
            <person name="Ma W."/>
            <person name="Chen L."/>
            <person name="Ding J."/>
            <person name="Weinhold E."/>
            <person name="Kohli R.M."/>
            <person name="Liu W."/>
            <person name="Zhu Z.J."/>
            <person name="Huang K."/>
            <person name="Tang H."/>
            <person name="Xu G.L."/>
        </authorList>
    </citation>
    <scope>FUNCTION</scope>
    <scope>CATALYTIC ACTIVITY</scope>
    <scope>COFACTOR</scope>
    <scope>DISRUPTION PHENOTYPE</scope>
    <scope>MUTAGENESIS OF ALA-330; HIS-345; ASP-347 AND ASP-350</scope>
</reference>
<reference key="3">
    <citation type="journal article" date="2021" name="Nat. Commun.">
        <title>Molecular mechanism for vitamin C-derived C5-glyceryl-methylcytosine DNA modification catalyzed by algal TET homologue CMD1.</title>
        <authorList>
            <person name="Li W."/>
            <person name="Zhang T."/>
            <person name="Sun M."/>
            <person name="Shi Y."/>
            <person name="Zhang X.J."/>
            <person name="Xu G.L."/>
            <person name="Ding J."/>
        </authorList>
    </citation>
    <scope>X-RAY CRYSTALLOGRAPHY (2.10 ANGSTROMS) IN COMPLEX WITH L-ASCORBATE AND IRON ION</scope>
    <scope>FUNCTION</scope>
    <scope>CATALYTIC ACTIVITY</scope>
    <scope>COFACTOR</scope>
</reference>
<accession>A0A2K3D5Z7</accession>
<organism>
    <name type="scientific">Chlamydomonas reinhardtii</name>
    <name type="common">Chlamydomonas smithii</name>
    <dbReference type="NCBI Taxonomy" id="3055"/>
    <lineage>
        <taxon>Eukaryota</taxon>
        <taxon>Viridiplantae</taxon>
        <taxon>Chlorophyta</taxon>
        <taxon>core chlorophytes</taxon>
        <taxon>Chlorophyceae</taxon>
        <taxon>CS clade</taxon>
        <taxon>Chlamydomonadales</taxon>
        <taxon>Chlamydomonadaceae</taxon>
        <taxon>Chlamydomonas</taxon>
    </lineage>
</organism>
<proteinExistence type="evidence at protein level"/>
<gene>
    <name evidence="3" type="primary">CMD1</name>
    <name evidence="6" type="ORF">CHLRE_12g553400v5</name>
</gene>
<dbReference type="EC" id="1.14.99.-" evidence="1 2"/>
<dbReference type="EMBL" id="CM008973">
    <property type="protein sequence ID" value="PNW75956.1"/>
    <property type="molecule type" value="Genomic_DNA"/>
</dbReference>
<dbReference type="PDB" id="7CY4">
    <property type="method" value="X-ray"/>
    <property type="resolution" value="2.20 A"/>
    <property type="chains" value="A=1-532"/>
</dbReference>
<dbReference type="PDB" id="7CY5">
    <property type="method" value="X-ray"/>
    <property type="resolution" value="2.20 A"/>
    <property type="chains" value="A=1-532"/>
</dbReference>
<dbReference type="PDB" id="7CY6">
    <property type="method" value="X-ray"/>
    <property type="resolution" value="2.10 A"/>
    <property type="chains" value="A=1-532"/>
</dbReference>
<dbReference type="PDB" id="7CY7">
    <property type="method" value="X-ray"/>
    <property type="resolution" value="2.15 A"/>
    <property type="chains" value="A=1-532"/>
</dbReference>
<dbReference type="PDB" id="7CY8">
    <property type="method" value="X-ray"/>
    <property type="resolution" value="2.40 A"/>
    <property type="chains" value="A=1-532"/>
</dbReference>
<dbReference type="PDBsum" id="7CY4"/>
<dbReference type="PDBsum" id="7CY5"/>
<dbReference type="PDBsum" id="7CY6"/>
<dbReference type="PDBsum" id="7CY7"/>
<dbReference type="PDBsum" id="7CY8"/>
<dbReference type="SMR" id="A0A2K3D5Z7"/>
<dbReference type="STRING" id="3055.A0A2K3D5Z7"/>
<dbReference type="PaxDb" id="3055-EDP03085"/>
<dbReference type="EnsemblPlants" id="PNW75956">
    <property type="protein sequence ID" value="PNW75956"/>
    <property type="gene ID" value="CHLRE_12g553400v5"/>
</dbReference>
<dbReference type="Gramene" id="PNW75956">
    <property type="protein sequence ID" value="PNW75956"/>
    <property type="gene ID" value="CHLRE_12g553400v5"/>
</dbReference>
<dbReference type="InParanoid" id="A0A2K3D5Z7"/>
<dbReference type="OrthoDB" id="555708at2759"/>
<dbReference type="Proteomes" id="UP000006906">
    <property type="component" value="Chromosome 12"/>
</dbReference>
<dbReference type="ExpressionAtlas" id="A0A2K3D5Z7">
    <property type="expression patterns" value="baseline and differential"/>
</dbReference>
<dbReference type="GO" id="GO:0005634">
    <property type="term" value="C:nucleus"/>
    <property type="evidence" value="ECO:0007669"/>
    <property type="project" value="UniProtKB-SubCell"/>
</dbReference>
<dbReference type="GO" id="GO:0051213">
    <property type="term" value="F:dioxygenase activity"/>
    <property type="evidence" value="ECO:0007669"/>
    <property type="project" value="UniProtKB-KW"/>
</dbReference>
<dbReference type="GO" id="GO:0005506">
    <property type="term" value="F:iron ion binding"/>
    <property type="evidence" value="ECO:0000314"/>
    <property type="project" value="UniProtKB"/>
</dbReference>
<dbReference type="GO" id="GO:0120204">
    <property type="term" value="F:methylcytosine to 5-glyceryl-methylcytosine dioxygenase activity"/>
    <property type="evidence" value="ECO:0000314"/>
    <property type="project" value="UniProtKB"/>
</dbReference>
<dbReference type="GO" id="GO:0141167">
    <property type="term" value="P:chromosomal 5-methylcytosine DNA demethylation, oxidation pathway"/>
    <property type="evidence" value="ECO:0000314"/>
    <property type="project" value="UniProtKB"/>
</dbReference>
<dbReference type="GO" id="GO:0010109">
    <property type="term" value="P:regulation of photosynthesis"/>
    <property type="evidence" value="ECO:0000315"/>
    <property type="project" value="UniProtKB"/>
</dbReference>
<name>CMD1_CHLRE</name>